<accession>Q8CQF6</accession>
<keyword id="KW-0186">Copper</keyword>
<keyword id="KW-0963">Cytoplasm</keyword>
<keyword id="KW-0479">Metal-binding</keyword>
<keyword id="KW-0560">Oxidoreductase</keyword>
<comment type="function">
    <text evidence="1">May be involved in copper homeostasis and oxidative stress response.</text>
</comment>
<comment type="cofactor">
    <cofactor evidence="1">
        <name>Cu cation</name>
        <dbReference type="ChEBI" id="CHEBI:23378"/>
    </cofactor>
    <text evidence="1">Binds 4 Cu cations per monomer.</text>
</comment>
<comment type="subcellular location">
    <subcellularLocation>
        <location evidence="3">Cytoplasm</location>
    </subcellularLocation>
</comment>
<comment type="similarity">
    <text evidence="3">Belongs to the multicopper oxidase family.</text>
</comment>
<gene>
    <name type="primary">mco</name>
    <name type="ordered locus">SE_0127</name>
</gene>
<evidence type="ECO:0000250" key="1"/>
<evidence type="ECO:0000256" key="2">
    <source>
        <dbReference type="SAM" id="MobiDB-lite"/>
    </source>
</evidence>
<evidence type="ECO:0000305" key="3"/>
<sequence>MMNMKEDKKNTMDMKNMKHHDERKKLNSSQGKNEIIFPEVAESKKDNNGYKNYTLKAQEGKTEFYKNNFSNTLGYNGNLLGPTLKLKKGDKVKIKLINNLDENTTFHWHGLEINGKVDGGPSQVIKPGKEKTIKFEVNQDSATLWYHPHPSPNTAKQVYNGLSGLLYIEDSKKNNYPSNYGKNDLPIIIQDKTFVSKKLNYSKTKDEDGTQGDTVLVNGIVNPKLTAKEEKIRLRLLNGSNARDLNLKLSNNQSFEYIASDGGQLKNAKKLKEINLAPSERKEIVIDLSKMKGEKISLVDNDKTVILPISNKEKSSNKGNTPKVSKKIKLEGMNDHVTINGNKFDPNRIDFTQKLNQKEVWEIENVKDKMGGMKHPFHIHGTQFKVLSVDGEKPPKDMRGKKDVISLEPGQKAKIEVVFKNTGTYMFHCHILEHEENGMMGQIKVTN</sequence>
<reference key="1">
    <citation type="journal article" date="2003" name="Mol. Microbiol.">
        <title>Genome-based analysis of virulence genes in a non-biofilm-forming Staphylococcus epidermidis strain (ATCC 12228).</title>
        <authorList>
            <person name="Zhang Y.-Q."/>
            <person name="Ren S.-X."/>
            <person name="Li H.-L."/>
            <person name="Wang Y.-X."/>
            <person name="Fu G."/>
            <person name="Yang J."/>
            <person name="Qin Z.-Q."/>
            <person name="Miao Y.-G."/>
            <person name="Wang W.-Y."/>
            <person name="Chen R.-S."/>
            <person name="Shen Y."/>
            <person name="Chen Z."/>
            <person name="Yuan Z.-H."/>
            <person name="Zhao G.-P."/>
            <person name="Qu D."/>
            <person name="Danchin A."/>
            <person name="Wen Y.-M."/>
        </authorList>
    </citation>
    <scope>NUCLEOTIDE SEQUENCE [LARGE SCALE GENOMIC DNA]</scope>
    <source>
        <strain>ATCC 12228 / FDA PCI 1200</strain>
    </source>
</reference>
<dbReference type="EC" id="1.-.-.-"/>
<dbReference type="EMBL" id="AE015929">
    <property type="protein sequence ID" value="AAO03724.1"/>
    <property type="molecule type" value="Genomic_DNA"/>
</dbReference>
<dbReference type="RefSeq" id="NP_763682.1">
    <property type="nucleotide sequence ID" value="NC_004461.1"/>
</dbReference>
<dbReference type="SMR" id="Q8CQF6"/>
<dbReference type="KEGG" id="sep:SE_0127"/>
<dbReference type="PATRIC" id="fig|176280.10.peg.118"/>
<dbReference type="eggNOG" id="COG2132">
    <property type="taxonomic scope" value="Bacteria"/>
</dbReference>
<dbReference type="HOGENOM" id="CLU_009100_2_0_9"/>
<dbReference type="OrthoDB" id="9757546at2"/>
<dbReference type="Proteomes" id="UP000001411">
    <property type="component" value="Chromosome"/>
</dbReference>
<dbReference type="GO" id="GO:0005737">
    <property type="term" value="C:cytoplasm"/>
    <property type="evidence" value="ECO:0007669"/>
    <property type="project" value="UniProtKB-SubCell"/>
</dbReference>
<dbReference type="GO" id="GO:0005507">
    <property type="term" value="F:copper ion binding"/>
    <property type="evidence" value="ECO:0007669"/>
    <property type="project" value="InterPro"/>
</dbReference>
<dbReference type="GO" id="GO:0016491">
    <property type="term" value="F:oxidoreductase activity"/>
    <property type="evidence" value="ECO:0007669"/>
    <property type="project" value="UniProtKB-KW"/>
</dbReference>
<dbReference type="CDD" id="cd04232">
    <property type="entry name" value="CuRO_1_CueO_FtsP"/>
    <property type="match status" value="1"/>
</dbReference>
<dbReference type="CDD" id="cd13867">
    <property type="entry name" value="CuRO_2_CueO_FtsP"/>
    <property type="match status" value="1"/>
</dbReference>
<dbReference type="CDD" id="cd13890">
    <property type="entry name" value="CuRO_3_CueO_FtsP"/>
    <property type="match status" value="1"/>
</dbReference>
<dbReference type="Gene3D" id="2.60.40.420">
    <property type="entry name" value="Cupredoxins - blue copper proteins"/>
    <property type="match status" value="3"/>
</dbReference>
<dbReference type="InterPro" id="IPR011707">
    <property type="entry name" value="Cu-oxidase-like_N"/>
</dbReference>
<dbReference type="InterPro" id="IPR011706">
    <property type="entry name" value="Cu-oxidase_C"/>
</dbReference>
<dbReference type="InterPro" id="IPR045087">
    <property type="entry name" value="Cu-oxidase_fam"/>
</dbReference>
<dbReference type="InterPro" id="IPR033138">
    <property type="entry name" value="Cu_oxidase_CS"/>
</dbReference>
<dbReference type="InterPro" id="IPR002355">
    <property type="entry name" value="Cu_oxidase_Cu_BS"/>
</dbReference>
<dbReference type="InterPro" id="IPR008972">
    <property type="entry name" value="Cupredoxin"/>
</dbReference>
<dbReference type="PANTHER" id="PTHR48267:SF1">
    <property type="entry name" value="BILIRUBIN OXIDASE"/>
    <property type="match status" value="1"/>
</dbReference>
<dbReference type="PANTHER" id="PTHR48267">
    <property type="entry name" value="CUPREDOXIN SUPERFAMILY PROTEIN"/>
    <property type="match status" value="1"/>
</dbReference>
<dbReference type="Pfam" id="PF07731">
    <property type="entry name" value="Cu-oxidase_2"/>
    <property type="match status" value="1"/>
</dbReference>
<dbReference type="Pfam" id="PF07732">
    <property type="entry name" value="Cu-oxidase_3"/>
    <property type="match status" value="1"/>
</dbReference>
<dbReference type="SUPFAM" id="SSF49503">
    <property type="entry name" value="Cupredoxins"/>
    <property type="match status" value="3"/>
</dbReference>
<dbReference type="PROSITE" id="PS00079">
    <property type="entry name" value="MULTICOPPER_OXIDASE1"/>
    <property type="match status" value="1"/>
</dbReference>
<dbReference type="PROSITE" id="PS00080">
    <property type="entry name" value="MULTICOPPER_OXIDASE2"/>
    <property type="match status" value="1"/>
</dbReference>
<name>MCO_STAES</name>
<proteinExistence type="inferred from homology"/>
<organism>
    <name type="scientific">Staphylococcus epidermidis (strain ATCC 12228 / FDA PCI 1200)</name>
    <dbReference type="NCBI Taxonomy" id="176280"/>
    <lineage>
        <taxon>Bacteria</taxon>
        <taxon>Bacillati</taxon>
        <taxon>Bacillota</taxon>
        <taxon>Bacilli</taxon>
        <taxon>Bacillales</taxon>
        <taxon>Staphylococcaceae</taxon>
        <taxon>Staphylococcus</taxon>
    </lineage>
</organism>
<protein>
    <recommendedName>
        <fullName>Multicopper oxidase mco</fullName>
        <ecNumber>1.-.-.-</ecNumber>
    </recommendedName>
</protein>
<feature type="chain" id="PRO_0000336997" description="Multicopper oxidase mco">
    <location>
        <begin position="1"/>
        <end position="447"/>
    </location>
</feature>
<feature type="region of interest" description="Disordered" evidence="2">
    <location>
        <begin position="1"/>
        <end position="28"/>
    </location>
</feature>
<feature type="compositionally biased region" description="Basic and acidic residues" evidence="2">
    <location>
        <begin position="1"/>
        <end position="25"/>
    </location>
</feature>
<feature type="binding site" description="type 2 copper site" evidence="1">
    <location>
        <position position="107"/>
    </location>
    <ligand>
        <name>Cu cation</name>
        <dbReference type="ChEBI" id="CHEBI:23378"/>
        <label>1</label>
    </ligand>
</feature>
<feature type="binding site" description="type 3 copper site" evidence="1">
    <location>
        <position position="109"/>
    </location>
    <ligand>
        <name>Cu cation</name>
        <dbReference type="ChEBI" id="CHEBI:23378"/>
        <label>2</label>
    </ligand>
</feature>
<feature type="binding site" description="type 3 copper site" evidence="1">
    <location>
        <position position="147"/>
    </location>
    <ligand>
        <name>Cu cation</name>
        <dbReference type="ChEBI" id="CHEBI:23378"/>
        <label>2</label>
    </ligand>
</feature>
<feature type="binding site" description="type 3 copper site" evidence="1">
    <location>
        <position position="149"/>
    </location>
    <ligand>
        <name>Cu cation</name>
        <dbReference type="ChEBI" id="CHEBI:23378"/>
        <label>3</label>
    </ligand>
</feature>
<feature type="binding site" description="type 1 copper site" evidence="1">
    <location>
        <position position="375"/>
    </location>
    <ligand>
        <name>Cu cation</name>
        <dbReference type="ChEBI" id="CHEBI:23378"/>
        <label>4</label>
    </ligand>
</feature>
<feature type="binding site" description="type 2 copper site" evidence="1">
    <location>
        <position position="378"/>
    </location>
    <ligand>
        <name>Cu cation</name>
        <dbReference type="ChEBI" id="CHEBI:23378"/>
        <label>1</label>
    </ligand>
</feature>
<feature type="binding site" description="type 3 copper site" evidence="1">
    <location>
        <position position="380"/>
    </location>
    <ligand>
        <name>Cu cation</name>
        <dbReference type="ChEBI" id="CHEBI:23378"/>
        <label>3</label>
    </ligand>
</feature>
<feature type="binding site" description="type 3 copper site" evidence="1">
    <location>
        <position position="428"/>
    </location>
    <ligand>
        <name>Cu cation</name>
        <dbReference type="ChEBI" id="CHEBI:23378"/>
        <label>3</label>
    </ligand>
</feature>
<feature type="binding site" description="type 1 copper site" evidence="1">
    <location>
        <position position="429"/>
    </location>
    <ligand>
        <name>Cu cation</name>
        <dbReference type="ChEBI" id="CHEBI:23378"/>
        <label>4</label>
    </ligand>
</feature>
<feature type="binding site" description="type 3 copper site" evidence="1">
    <location>
        <position position="430"/>
    </location>
    <ligand>
        <name>Cu cation</name>
        <dbReference type="ChEBI" id="CHEBI:23378"/>
        <label>2</label>
    </ligand>
</feature>
<feature type="binding site" description="type 1 copper site" evidence="1">
    <location>
        <position position="434"/>
    </location>
    <ligand>
        <name>Cu cation</name>
        <dbReference type="ChEBI" id="CHEBI:23378"/>
        <label>4</label>
    </ligand>
</feature>
<feature type="binding site" description="type 1 copper site" evidence="1">
    <location>
        <position position="439"/>
    </location>
    <ligand>
        <name>Cu cation</name>
        <dbReference type="ChEBI" id="CHEBI:23378"/>
        <label>4</label>
    </ligand>
</feature>